<comment type="catalytic activity">
    <reaction>
        <text>L-seryl-[protein] + ATP = O-phospho-L-seryl-[protein] + ADP + H(+)</text>
        <dbReference type="Rhea" id="RHEA:17989"/>
        <dbReference type="Rhea" id="RHEA-COMP:9863"/>
        <dbReference type="Rhea" id="RHEA-COMP:11604"/>
        <dbReference type="ChEBI" id="CHEBI:15378"/>
        <dbReference type="ChEBI" id="CHEBI:29999"/>
        <dbReference type="ChEBI" id="CHEBI:30616"/>
        <dbReference type="ChEBI" id="CHEBI:83421"/>
        <dbReference type="ChEBI" id="CHEBI:456216"/>
        <dbReference type="EC" id="2.7.11.1"/>
    </reaction>
</comment>
<comment type="catalytic activity">
    <reaction>
        <text>L-threonyl-[protein] + ATP = O-phospho-L-threonyl-[protein] + ADP + H(+)</text>
        <dbReference type="Rhea" id="RHEA:46608"/>
        <dbReference type="Rhea" id="RHEA-COMP:11060"/>
        <dbReference type="Rhea" id="RHEA-COMP:11605"/>
        <dbReference type="ChEBI" id="CHEBI:15378"/>
        <dbReference type="ChEBI" id="CHEBI:30013"/>
        <dbReference type="ChEBI" id="CHEBI:30616"/>
        <dbReference type="ChEBI" id="CHEBI:61977"/>
        <dbReference type="ChEBI" id="CHEBI:456216"/>
        <dbReference type="EC" id="2.7.11.1"/>
    </reaction>
</comment>
<comment type="subcellular location">
    <subcellularLocation>
        <location evidence="3">Endoplasmic reticulum</location>
    </subcellularLocation>
    <subcellularLocation>
        <location evidence="3">Golgi apparatus</location>
    </subcellularLocation>
</comment>
<comment type="similarity">
    <text evidence="1">Belongs to the protein kinase superfamily. Ser/Thr protein kinase family.</text>
</comment>
<sequence length="344" mass="39009">MQNLWKNALDTLSPYISNLFDNDVVCINNERYRIQKLLGEGGFAFVYLVQNVSNEKLYALKKIKCSFGNKGIKKAMKEADYHRKFKSNYLLKSYTHQLVKEADGSEFVYILFPYFAKGSVAQVIRNCDIEGSYISEKRILVWCSCLCKALQYLHENVAGDSPKQPEVNDLIMFDEPQVPQNTSNNNLVSYIHGDIKPDNLLLHENSREIVLTDFGSICLVPIFASNNSEAIAIQDKASENCTMPFRAPELFHVKAGSTITEKADIWSFGCTLYTIMFHASPFEREVSQGGSLALAVCNAQYSFPRKHPYSTLLCEIVEACLQREPNKRPSARELLSKIDLQINQ</sequence>
<reference key="1">
    <citation type="journal article" date="2002" name="Nature">
        <title>The genome sequence of Schizosaccharomyces pombe.</title>
        <authorList>
            <person name="Wood V."/>
            <person name="Gwilliam R."/>
            <person name="Rajandream M.A."/>
            <person name="Lyne M.H."/>
            <person name="Lyne R."/>
            <person name="Stewart A."/>
            <person name="Sgouros J.G."/>
            <person name="Peat N."/>
            <person name="Hayles J."/>
            <person name="Baker S.G."/>
            <person name="Basham D."/>
            <person name="Bowman S."/>
            <person name="Brooks K."/>
            <person name="Brown D."/>
            <person name="Brown S."/>
            <person name="Chillingworth T."/>
            <person name="Churcher C.M."/>
            <person name="Collins M."/>
            <person name="Connor R."/>
            <person name="Cronin A."/>
            <person name="Davis P."/>
            <person name="Feltwell T."/>
            <person name="Fraser A."/>
            <person name="Gentles S."/>
            <person name="Goble A."/>
            <person name="Hamlin N."/>
            <person name="Harris D.E."/>
            <person name="Hidalgo J."/>
            <person name="Hodgson G."/>
            <person name="Holroyd S."/>
            <person name="Hornsby T."/>
            <person name="Howarth S."/>
            <person name="Huckle E.J."/>
            <person name="Hunt S."/>
            <person name="Jagels K."/>
            <person name="James K.D."/>
            <person name="Jones L."/>
            <person name="Jones M."/>
            <person name="Leather S."/>
            <person name="McDonald S."/>
            <person name="McLean J."/>
            <person name="Mooney P."/>
            <person name="Moule S."/>
            <person name="Mungall K.L."/>
            <person name="Murphy L.D."/>
            <person name="Niblett D."/>
            <person name="Odell C."/>
            <person name="Oliver K."/>
            <person name="O'Neil S."/>
            <person name="Pearson D."/>
            <person name="Quail M.A."/>
            <person name="Rabbinowitsch E."/>
            <person name="Rutherford K.M."/>
            <person name="Rutter S."/>
            <person name="Saunders D."/>
            <person name="Seeger K."/>
            <person name="Sharp S."/>
            <person name="Skelton J."/>
            <person name="Simmonds M.N."/>
            <person name="Squares R."/>
            <person name="Squares S."/>
            <person name="Stevens K."/>
            <person name="Taylor K."/>
            <person name="Taylor R.G."/>
            <person name="Tivey A."/>
            <person name="Walsh S.V."/>
            <person name="Warren T."/>
            <person name="Whitehead S."/>
            <person name="Woodward J.R."/>
            <person name="Volckaert G."/>
            <person name="Aert R."/>
            <person name="Robben J."/>
            <person name="Grymonprez B."/>
            <person name="Weltjens I."/>
            <person name="Vanstreels E."/>
            <person name="Rieger M."/>
            <person name="Schaefer M."/>
            <person name="Mueller-Auer S."/>
            <person name="Gabel C."/>
            <person name="Fuchs M."/>
            <person name="Duesterhoeft A."/>
            <person name="Fritzc C."/>
            <person name="Holzer E."/>
            <person name="Moestl D."/>
            <person name="Hilbert H."/>
            <person name="Borzym K."/>
            <person name="Langer I."/>
            <person name="Beck A."/>
            <person name="Lehrach H."/>
            <person name="Reinhardt R."/>
            <person name="Pohl T.M."/>
            <person name="Eger P."/>
            <person name="Zimmermann W."/>
            <person name="Wedler H."/>
            <person name="Wambutt R."/>
            <person name="Purnelle B."/>
            <person name="Goffeau A."/>
            <person name="Cadieu E."/>
            <person name="Dreano S."/>
            <person name="Gloux S."/>
            <person name="Lelaure V."/>
            <person name="Mottier S."/>
            <person name="Galibert F."/>
            <person name="Aves S.J."/>
            <person name="Xiang Z."/>
            <person name="Hunt C."/>
            <person name="Moore K."/>
            <person name="Hurst S.M."/>
            <person name="Lucas M."/>
            <person name="Rochet M."/>
            <person name="Gaillardin C."/>
            <person name="Tallada V.A."/>
            <person name="Garzon A."/>
            <person name="Thode G."/>
            <person name="Daga R.R."/>
            <person name="Cruzado L."/>
            <person name="Jimenez J."/>
            <person name="Sanchez M."/>
            <person name="del Rey F."/>
            <person name="Benito J."/>
            <person name="Dominguez A."/>
            <person name="Revuelta J.L."/>
            <person name="Moreno S."/>
            <person name="Armstrong J."/>
            <person name="Forsburg S.L."/>
            <person name="Cerutti L."/>
            <person name="Lowe T."/>
            <person name="McCombie W.R."/>
            <person name="Paulsen I."/>
            <person name="Potashkin J."/>
            <person name="Shpakovski G.V."/>
            <person name="Ussery D."/>
            <person name="Barrell B.G."/>
            <person name="Nurse P."/>
        </authorList>
    </citation>
    <scope>NUCLEOTIDE SEQUENCE [LARGE SCALE GENOMIC DNA]</scope>
    <source>
        <strain>972 / ATCC 24843</strain>
    </source>
</reference>
<reference key="2">
    <citation type="journal article" date="2005" name="Eukaryot. Cell">
        <title>Systematic deletion analysis of fission yeast protein kinases.</title>
        <authorList>
            <person name="Bimbo A."/>
            <person name="Jia Y."/>
            <person name="Poh S.L."/>
            <person name="Karuturi R.K.M."/>
            <person name="den Elzen N."/>
            <person name="Peng X."/>
            <person name="Zheng L."/>
            <person name="O'Connell M."/>
            <person name="Liu E.T."/>
            <person name="Balasubramanian M.K."/>
            <person name="Liu J."/>
        </authorList>
    </citation>
    <scope>IDENTIFICATION</scope>
</reference>
<reference key="3">
    <citation type="journal article" date="2006" name="Nat. Biotechnol.">
        <title>ORFeome cloning and global analysis of protein localization in the fission yeast Schizosaccharomyces pombe.</title>
        <authorList>
            <person name="Matsuyama A."/>
            <person name="Arai R."/>
            <person name="Yashiroda Y."/>
            <person name="Shirai A."/>
            <person name="Kamata A."/>
            <person name="Sekido S."/>
            <person name="Kobayashi Y."/>
            <person name="Hashimoto A."/>
            <person name="Hamamoto M."/>
            <person name="Hiraoka Y."/>
            <person name="Horinouchi S."/>
            <person name="Yoshida M."/>
        </authorList>
    </citation>
    <scope>SUBCELLULAR LOCATION [LARGE SCALE ANALYSIS]</scope>
</reference>
<organism>
    <name type="scientific">Schizosaccharomyces pombe (strain 972 / ATCC 24843)</name>
    <name type="common">Fission yeast</name>
    <dbReference type="NCBI Taxonomy" id="284812"/>
    <lineage>
        <taxon>Eukaryota</taxon>
        <taxon>Fungi</taxon>
        <taxon>Dikarya</taxon>
        <taxon>Ascomycota</taxon>
        <taxon>Taphrinomycotina</taxon>
        <taxon>Schizosaccharomycetes</taxon>
        <taxon>Schizosaccharomycetales</taxon>
        <taxon>Schizosaccharomycetaceae</taxon>
        <taxon>Schizosaccharomyces</taxon>
    </lineage>
</organism>
<keyword id="KW-0067">ATP-binding</keyword>
<keyword id="KW-0256">Endoplasmic reticulum</keyword>
<keyword id="KW-0333">Golgi apparatus</keyword>
<keyword id="KW-0418">Kinase</keyword>
<keyword id="KW-0547">Nucleotide-binding</keyword>
<keyword id="KW-1185">Reference proteome</keyword>
<keyword id="KW-0723">Serine/threonine-protein kinase</keyword>
<keyword id="KW-0808">Transferase</keyword>
<feature type="chain" id="PRO_0000086045" description="Serine/threonine-protein kinase ppk13">
    <location>
        <begin position="1"/>
        <end position="344"/>
    </location>
</feature>
<feature type="domain" description="Protein kinase" evidence="1">
    <location>
        <begin position="76"/>
        <end position="344"/>
    </location>
</feature>
<feature type="active site" description="Proton acceptor" evidence="1 2">
    <location>
        <position position="192"/>
    </location>
</feature>
<feature type="binding site" evidence="1">
    <location>
        <begin position="38"/>
        <end position="46"/>
    </location>
    <ligand>
        <name>ATP</name>
        <dbReference type="ChEBI" id="CHEBI:30616"/>
    </ligand>
</feature>
<feature type="binding site" evidence="1">
    <location>
        <position position="61"/>
    </location>
    <ligand>
        <name>ATP</name>
        <dbReference type="ChEBI" id="CHEBI:30616"/>
    </ligand>
</feature>
<gene>
    <name type="primary">ppk13</name>
    <name type="ORF">SPAC3H1.13</name>
</gene>
<accession>Q10078</accession>
<protein>
    <recommendedName>
        <fullName>Serine/threonine-protein kinase ppk13</fullName>
        <ecNumber>2.7.11.1</ecNumber>
    </recommendedName>
</protein>
<evidence type="ECO:0000255" key="1">
    <source>
        <dbReference type="PROSITE-ProRule" id="PRU00159"/>
    </source>
</evidence>
<evidence type="ECO:0000255" key="2">
    <source>
        <dbReference type="PROSITE-ProRule" id="PRU10027"/>
    </source>
</evidence>
<evidence type="ECO:0000269" key="3">
    <source>
    </source>
</evidence>
<name>PPK13_SCHPO</name>
<dbReference type="EC" id="2.7.11.1"/>
<dbReference type="EMBL" id="CU329670">
    <property type="protein sequence ID" value="CAA92266.2"/>
    <property type="molecule type" value="Genomic_DNA"/>
</dbReference>
<dbReference type="PIR" id="T38745">
    <property type="entry name" value="T38745"/>
</dbReference>
<dbReference type="RefSeq" id="NP_593555.1">
    <property type="nucleotide sequence ID" value="NM_001018988.2"/>
</dbReference>
<dbReference type="SMR" id="Q10078"/>
<dbReference type="BioGRID" id="279860">
    <property type="interactions" value="5"/>
</dbReference>
<dbReference type="FunCoup" id="Q10078">
    <property type="interactions" value="439"/>
</dbReference>
<dbReference type="STRING" id="284812.Q10078"/>
<dbReference type="iPTMnet" id="Q10078"/>
<dbReference type="PaxDb" id="4896-SPAC3H1.13.1"/>
<dbReference type="EnsemblFungi" id="SPAC3H1.13.1">
    <property type="protein sequence ID" value="SPAC3H1.13.1:pep"/>
    <property type="gene ID" value="SPAC3H1.13"/>
</dbReference>
<dbReference type="GeneID" id="2543440"/>
<dbReference type="KEGG" id="spo:2543440"/>
<dbReference type="PomBase" id="SPAC3H1.13">
    <property type="gene designation" value="ppk13"/>
</dbReference>
<dbReference type="VEuPathDB" id="FungiDB:SPAC3H1.13"/>
<dbReference type="eggNOG" id="KOG2345">
    <property type="taxonomic scope" value="Eukaryota"/>
</dbReference>
<dbReference type="HOGENOM" id="CLU_000288_109_1_1"/>
<dbReference type="InParanoid" id="Q10078"/>
<dbReference type="OMA" id="AMHQYKV"/>
<dbReference type="PhylomeDB" id="Q10078"/>
<dbReference type="PRO" id="PR:Q10078"/>
<dbReference type="Proteomes" id="UP000002485">
    <property type="component" value="Chromosome I"/>
</dbReference>
<dbReference type="GO" id="GO:0005737">
    <property type="term" value="C:cytoplasm"/>
    <property type="evidence" value="ECO:0007005"/>
    <property type="project" value="PomBase"/>
</dbReference>
<dbReference type="GO" id="GO:0005783">
    <property type="term" value="C:endoplasmic reticulum"/>
    <property type="evidence" value="ECO:0007005"/>
    <property type="project" value="PomBase"/>
</dbReference>
<dbReference type="GO" id="GO:0005794">
    <property type="term" value="C:Golgi apparatus"/>
    <property type="evidence" value="ECO:0007005"/>
    <property type="project" value="PomBase"/>
</dbReference>
<dbReference type="GO" id="GO:0005773">
    <property type="term" value="C:vacuole"/>
    <property type="evidence" value="ECO:0007669"/>
    <property type="project" value="GOC"/>
</dbReference>
<dbReference type="GO" id="GO:0005524">
    <property type="term" value="F:ATP binding"/>
    <property type="evidence" value="ECO:0000255"/>
    <property type="project" value="PomBase"/>
</dbReference>
<dbReference type="GO" id="GO:0106310">
    <property type="term" value="F:protein serine kinase activity"/>
    <property type="evidence" value="ECO:0007669"/>
    <property type="project" value="RHEA"/>
</dbReference>
<dbReference type="GO" id="GO:0004674">
    <property type="term" value="F:protein serine/threonine kinase activity"/>
    <property type="evidence" value="ECO:0000318"/>
    <property type="project" value="GO_Central"/>
</dbReference>
<dbReference type="GO" id="GO:0032889">
    <property type="term" value="P:regulation of vacuole fusion, non-autophagic"/>
    <property type="evidence" value="ECO:0000266"/>
    <property type="project" value="PomBase"/>
</dbReference>
<dbReference type="GO" id="GO:0023052">
    <property type="term" value="P:signaling"/>
    <property type="evidence" value="ECO:0000303"/>
    <property type="project" value="PomBase"/>
</dbReference>
<dbReference type="GO" id="GO:0006624">
    <property type="term" value="P:vacuolar protein processing"/>
    <property type="evidence" value="ECO:0000318"/>
    <property type="project" value="GO_Central"/>
</dbReference>
<dbReference type="CDD" id="cd13986">
    <property type="entry name" value="STKc_16"/>
    <property type="match status" value="1"/>
</dbReference>
<dbReference type="Gene3D" id="3.30.200.20">
    <property type="entry name" value="Phosphorylase Kinase, domain 1"/>
    <property type="match status" value="1"/>
</dbReference>
<dbReference type="Gene3D" id="1.10.510.10">
    <property type="entry name" value="Transferase(Phosphotransferase) domain 1"/>
    <property type="match status" value="1"/>
</dbReference>
<dbReference type="InterPro" id="IPR011009">
    <property type="entry name" value="Kinase-like_dom_sf"/>
</dbReference>
<dbReference type="InterPro" id="IPR000719">
    <property type="entry name" value="Prot_kinase_dom"/>
</dbReference>
<dbReference type="InterPro" id="IPR017441">
    <property type="entry name" value="Protein_kinase_ATP_BS"/>
</dbReference>
<dbReference type="InterPro" id="IPR052239">
    <property type="entry name" value="Ser/Thr-specific_kinases"/>
</dbReference>
<dbReference type="InterPro" id="IPR008271">
    <property type="entry name" value="Ser/Thr_kinase_AS"/>
</dbReference>
<dbReference type="PANTHER" id="PTHR45998">
    <property type="entry name" value="SERINE/THREONINE-PROTEIN KINASE 16"/>
    <property type="match status" value="1"/>
</dbReference>
<dbReference type="PANTHER" id="PTHR45998:SF2">
    <property type="entry name" value="SERINE_THREONINE-PROTEIN KINASE 16"/>
    <property type="match status" value="1"/>
</dbReference>
<dbReference type="Pfam" id="PF00069">
    <property type="entry name" value="Pkinase"/>
    <property type="match status" value="2"/>
</dbReference>
<dbReference type="SMART" id="SM00220">
    <property type="entry name" value="S_TKc"/>
    <property type="match status" value="1"/>
</dbReference>
<dbReference type="SUPFAM" id="SSF56112">
    <property type="entry name" value="Protein kinase-like (PK-like)"/>
    <property type="match status" value="1"/>
</dbReference>
<dbReference type="PROSITE" id="PS00107">
    <property type="entry name" value="PROTEIN_KINASE_ATP"/>
    <property type="match status" value="1"/>
</dbReference>
<dbReference type="PROSITE" id="PS50011">
    <property type="entry name" value="PROTEIN_KINASE_DOM"/>
    <property type="match status" value="1"/>
</dbReference>
<dbReference type="PROSITE" id="PS00108">
    <property type="entry name" value="PROTEIN_KINASE_ST"/>
    <property type="match status" value="1"/>
</dbReference>
<proteinExistence type="inferred from homology"/>